<sequence length="143" mass="16193">MSHDSDDKTFPYQKDDAELRRRLTPMQYEVTQHAATERAFTGEYTDTEDAGIYKCVVCSTPLFESGAKFHSGCGWPSYFKPLNGEVIDEKVDYSHGMVRVEVRCNNCGAHLGHVFEDGPRDKTGLRYCINSAALNFESRPENE</sequence>
<comment type="catalytic activity">
    <reaction evidence="1">
        <text>L-methionyl-[protein] + [thioredoxin]-disulfide + H2O = L-methionyl-(R)-S-oxide-[protein] + [thioredoxin]-dithiol</text>
        <dbReference type="Rhea" id="RHEA:24164"/>
        <dbReference type="Rhea" id="RHEA-COMP:10698"/>
        <dbReference type="Rhea" id="RHEA-COMP:10700"/>
        <dbReference type="Rhea" id="RHEA-COMP:12313"/>
        <dbReference type="Rhea" id="RHEA-COMP:12314"/>
        <dbReference type="ChEBI" id="CHEBI:15377"/>
        <dbReference type="ChEBI" id="CHEBI:16044"/>
        <dbReference type="ChEBI" id="CHEBI:29950"/>
        <dbReference type="ChEBI" id="CHEBI:45764"/>
        <dbReference type="ChEBI" id="CHEBI:50058"/>
        <dbReference type="EC" id="1.8.4.12"/>
    </reaction>
</comment>
<comment type="cofactor">
    <cofactor evidence="1">
        <name>Zn(2+)</name>
        <dbReference type="ChEBI" id="CHEBI:29105"/>
    </cofactor>
    <text evidence="1">Binds 1 zinc ion per subunit. The zinc ion is important for the structural integrity of the protein.</text>
</comment>
<comment type="similarity">
    <text evidence="1">Belongs to the MsrB Met sulfoxide reductase family.</text>
</comment>
<name>MSRB_BURCH</name>
<evidence type="ECO:0000255" key="1">
    <source>
        <dbReference type="HAMAP-Rule" id="MF_01400"/>
    </source>
</evidence>
<evidence type="ECO:0000255" key="2">
    <source>
        <dbReference type="PROSITE-ProRule" id="PRU01126"/>
    </source>
</evidence>
<dbReference type="EC" id="1.8.4.12" evidence="1"/>
<dbReference type="EMBL" id="CP000458">
    <property type="protein sequence ID" value="ABK08660.1"/>
    <property type="molecule type" value="Genomic_DNA"/>
</dbReference>
<dbReference type="RefSeq" id="WP_011549620.1">
    <property type="nucleotide sequence ID" value="NC_008542.1"/>
</dbReference>
<dbReference type="SMR" id="A0K833"/>
<dbReference type="KEGG" id="bch:Bcen2424_1909"/>
<dbReference type="HOGENOM" id="CLU_031040_8_5_4"/>
<dbReference type="GO" id="GO:0005737">
    <property type="term" value="C:cytoplasm"/>
    <property type="evidence" value="ECO:0007669"/>
    <property type="project" value="TreeGrafter"/>
</dbReference>
<dbReference type="GO" id="GO:0033743">
    <property type="term" value="F:peptide-methionine (R)-S-oxide reductase activity"/>
    <property type="evidence" value="ECO:0007669"/>
    <property type="project" value="UniProtKB-UniRule"/>
</dbReference>
<dbReference type="GO" id="GO:0008270">
    <property type="term" value="F:zinc ion binding"/>
    <property type="evidence" value="ECO:0007669"/>
    <property type="project" value="UniProtKB-UniRule"/>
</dbReference>
<dbReference type="GO" id="GO:0030091">
    <property type="term" value="P:protein repair"/>
    <property type="evidence" value="ECO:0007669"/>
    <property type="project" value="InterPro"/>
</dbReference>
<dbReference type="GO" id="GO:0006979">
    <property type="term" value="P:response to oxidative stress"/>
    <property type="evidence" value="ECO:0007669"/>
    <property type="project" value="InterPro"/>
</dbReference>
<dbReference type="FunFam" id="2.170.150.20:FF:000003">
    <property type="entry name" value="Peptide methionine sulfoxide reductase MsrB"/>
    <property type="match status" value="1"/>
</dbReference>
<dbReference type="Gene3D" id="2.170.150.20">
    <property type="entry name" value="Peptide methionine sulfoxide reductase"/>
    <property type="match status" value="1"/>
</dbReference>
<dbReference type="HAMAP" id="MF_01400">
    <property type="entry name" value="MsrB"/>
    <property type="match status" value="1"/>
</dbReference>
<dbReference type="InterPro" id="IPR028427">
    <property type="entry name" value="Met_Sox_Rdtase_MsrB"/>
</dbReference>
<dbReference type="InterPro" id="IPR002579">
    <property type="entry name" value="Met_Sox_Rdtase_MsrB_dom"/>
</dbReference>
<dbReference type="InterPro" id="IPR011057">
    <property type="entry name" value="Mss4-like_sf"/>
</dbReference>
<dbReference type="NCBIfam" id="TIGR00357">
    <property type="entry name" value="peptide-methionine (R)-S-oxide reductase MsrB"/>
    <property type="match status" value="1"/>
</dbReference>
<dbReference type="PANTHER" id="PTHR10173">
    <property type="entry name" value="METHIONINE SULFOXIDE REDUCTASE"/>
    <property type="match status" value="1"/>
</dbReference>
<dbReference type="PANTHER" id="PTHR10173:SF52">
    <property type="entry name" value="METHIONINE-R-SULFOXIDE REDUCTASE B1"/>
    <property type="match status" value="1"/>
</dbReference>
<dbReference type="Pfam" id="PF01641">
    <property type="entry name" value="SelR"/>
    <property type="match status" value="1"/>
</dbReference>
<dbReference type="SUPFAM" id="SSF51316">
    <property type="entry name" value="Mss4-like"/>
    <property type="match status" value="1"/>
</dbReference>
<dbReference type="PROSITE" id="PS51790">
    <property type="entry name" value="MSRB"/>
    <property type="match status" value="1"/>
</dbReference>
<reference key="1">
    <citation type="submission" date="2006-08" db="EMBL/GenBank/DDBJ databases">
        <title>Complete sequence of chromosome 1 of Burkholderia cenocepacia HI2424.</title>
        <authorList>
            <person name="Copeland A."/>
            <person name="Lucas S."/>
            <person name="Lapidus A."/>
            <person name="Barry K."/>
            <person name="Detter J.C."/>
            <person name="Glavina del Rio T."/>
            <person name="Hammon N."/>
            <person name="Israni S."/>
            <person name="Pitluck S."/>
            <person name="Chain P."/>
            <person name="Malfatti S."/>
            <person name="Shin M."/>
            <person name="Vergez L."/>
            <person name="Schmutz J."/>
            <person name="Larimer F."/>
            <person name="Land M."/>
            <person name="Hauser L."/>
            <person name="Kyrpides N."/>
            <person name="Kim E."/>
            <person name="LiPuma J.J."/>
            <person name="Gonzalez C.F."/>
            <person name="Konstantinidis K."/>
            <person name="Tiedje J.M."/>
            <person name="Richardson P."/>
        </authorList>
    </citation>
    <scope>NUCLEOTIDE SEQUENCE [LARGE SCALE GENOMIC DNA]</scope>
    <source>
        <strain>HI2424</strain>
    </source>
</reference>
<feature type="chain" id="PRO_1000145353" description="Peptide methionine sulfoxide reductase MsrB">
    <location>
        <begin position="1"/>
        <end position="143"/>
    </location>
</feature>
<feature type="domain" description="MsrB" evidence="2">
    <location>
        <begin position="16"/>
        <end position="139"/>
    </location>
</feature>
<feature type="active site" description="Nucleophile" evidence="2">
    <location>
        <position position="128"/>
    </location>
</feature>
<feature type="binding site" evidence="2">
    <location>
        <position position="55"/>
    </location>
    <ligand>
        <name>Zn(2+)</name>
        <dbReference type="ChEBI" id="CHEBI:29105"/>
    </ligand>
</feature>
<feature type="binding site" evidence="2">
    <location>
        <position position="58"/>
    </location>
    <ligand>
        <name>Zn(2+)</name>
        <dbReference type="ChEBI" id="CHEBI:29105"/>
    </ligand>
</feature>
<feature type="binding site" evidence="2">
    <location>
        <position position="104"/>
    </location>
    <ligand>
        <name>Zn(2+)</name>
        <dbReference type="ChEBI" id="CHEBI:29105"/>
    </ligand>
</feature>
<feature type="binding site" evidence="2">
    <location>
        <position position="107"/>
    </location>
    <ligand>
        <name>Zn(2+)</name>
        <dbReference type="ChEBI" id="CHEBI:29105"/>
    </ligand>
</feature>
<keyword id="KW-0479">Metal-binding</keyword>
<keyword id="KW-0560">Oxidoreductase</keyword>
<keyword id="KW-0862">Zinc</keyword>
<protein>
    <recommendedName>
        <fullName evidence="1">Peptide methionine sulfoxide reductase MsrB</fullName>
        <ecNumber evidence="1">1.8.4.12</ecNumber>
    </recommendedName>
    <alternativeName>
        <fullName evidence="1">Peptide-methionine (R)-S-oxide reductase</fullName>
    </alternativeName>
</protein>
<accession>A0K833</accession>
<organism>
    <name type="scientific">Burkholderia cenocepacia (strain HI2424)</name>
    <dbReference type="NCBI Taxonomy" id="331272"/>
    <lineage>
        <taxon>Bacteria</taxon>
        <taxon>Pseudomonadati</taxon>
        <taxon>Pseudomonadota</taxon>
        <taxon>Betaproteobacteria</taxon>
        <taxon>Burkholderiales</taxon>
        <taxon>Burkholderiaceae</taxon>
        <taxon>Burkholderia</taxon>
        <taxon>Burkholderia cepacia complex</taxon>
    </lineage>
</organism>
<proteinExistence type="inferred from homology"/>
<gene>
    <name evidence="1" type="primary">msrB</name>
    <name type="ordered locus">Bcen2424_1909</name>
</gene>